<sequence>SITKIKAREIL</sequence>
<gene>
    <name evidence="1" type="primary">ENO3</name>
</gene>
<accession>B3A0L6</accession>
<evidence type="ECO:0000250" key="1">
    <source>
        <dbReference type="UniProtKB" id="P00924"/>
    </source>
</evidence>
<evidence type="ECO:0000250" key="2">
    <source>
        <dbReference type="UniProtKB" id="P15429"/>
    </source>
</evidence>
<evidence type="ECO:0000250" key="3">
    <source>
        <dbReference type="UniProtKB" id="P21550"/>
    </source>
</evidence>
<evidence type="ECO:0000255" key="4"/>
<evidence type="ECO:0000269" key="5">
    <source>
    </source>
</evidence>
<evidence type="ECO:0000303" key="6">
    <source>
    </source>
</evidence>
<evidence type="ECO:0000305" key="7"/>
<organism>
    <name type="scientific">Gadus morhua</name>
    <name type="common">Atlantic cod</name>
    <dbReference type="NCBI Taxonomy" id="8049"/>
    <lineage>
        <taxon>Eukaryota</taxon>
        <taxon>Metazoa</taxon>
        <taxon>Chordata</taxon>
        <taxon>Craniata</taxon>
        <taxon>Vertebrata</taxon>
        <taxon>Euteleostomi</taxon>
        <taxon>Actinopterygii</taxon>
        <taxon>Neopterygii</taxon>
        <taxon>Teleostei</taxon>
        <taxon>Neoteleostei</taxon>
        <taxon>Acanthomorphata</taxon>
        <taxon>Zeiogadaria</taxon>
        <taxon>Gadariae</taxon>
        <taxon>Gadiformes</taxon>
        <taxon>Gadoidei</taxon>
        <taxon>Gadidae</taxon>
        <taxon>Gadus</taxon>
    </lineage>
</organism>
<proteinExistence type="evidence at protein level"/>
<feature type="chain" id="PRO_0000425075" description="Beta-enolase">
    <location>
        <begin position="1"/>
        <end position="11" status="greater than"/>
    </location>
</feature>
<feature type="non-terminal residue" evidence="6">
    <location>
        <position position="11"/>
    </location>
</feature>
<protein>
    <recommendedName>
        <fullName evidence="6">Beta-enolase</fullName>
        <ecNumber evidence="1">4.2.1.11</ecNumber>
    </recommendedName>
    <alternativeName>
        <fullName evidence="3">2-phospho-D-glycerate hydro-lyase</fullName>
    </alternativeName>
    <alternativeName>
        <fullName evidence="3">Enolase 3</fullName>
    </alternativeName>
    <alternativeName>
        <fullName evidence="3">Muscle-specific enolase</fullName>
        <shortName evidence="3">MSE</shortName>
    </alternativeName>
    <alternativeName>
        <fullName evidence="3">Skeletal muscle enolase</fullName>
    </alternativeName>
    <allergenName evidence="6">Gad m 2.0101</allergenName>
</protein>
<name>ENOB_GADMO</name>
<dbReference type="EC" id="4.2.1.11" evidence="1"/>
<dbReference type="Allergome" id="10132">
    <property type="allergen name" value="Thu a 2"/>
</dbReference>
<dbReference type="Allergome" id="10147">
    <property type="allergen name" value="Gad m 2"/>
</dbReference>
<dbReference type="Allergome" id="10148">
    <property type="allergen name" value="Gad m 2.0101"/>
</dbReference>
<dbReference type="UniPathway" id="UPA00109">
    <property type="reaction ID" value="UER00187"/>
</dbReference>
<dbReference type="Proteomes" id="UP000694546">
    <property type="component" value="Unplaced"/>
</dbReference>
<dbReference type="GO" id="GO:0005737">
    <property type="term" value="C:cytoplasm"/>
    <property type="evidence" value="ECO:0007669"/>
    <property type="project" value="UniProtKB-SubCell"/>
</dbReference>
<dbReference type="GO" id="GO:0046872">
    <property type="term" value="F:metal ion binding"/>
    <property type="evidence" value="ECO:0007669"/>
    <property type="project" value="UniProtKB-KW"/>
</dbReference>
<dbReference type="GO" id="GO:0004634">
    <property type="term" value="F:phosphopyruvate hydratase activity"/>
    <property type="evidence" value="ECO:0007669"/>
    <property type="project" value="UniProtKB-EC"/>
</dbReference>
<dbReference type="GO" id="GO:0006096">
    <property type="term" value="P:glycolytic process"/>
    <property type="evidence" value="ECO:0007669"/>
    <property type="project" value="UniProtKB-UniPathway"/>
</dbReference>
<comment type="function">
    <text evidence="2">Glycolytic enzyme that catalyzes the conversion of 2-phosphoglycerate to phosphoenolpyruvate.</text>
</comment>
<comment type="catalytic activity">
    <reaction evidence="2">
        <text>(2R)-2-phosphoglycerate = phosphoenolpyruvate + H2O</text>
        <dbReference type="Rhea" id="RHEA:10164"/>
        <dbReference type="ChEBI" id="CHEBI:15377"/>
        <dbReference type="ChEBI" id="CHEBI:58289"/>
        <dbReference type="ChEBI" id="CHEBI:58702"/>
        <dbReference type="EC" id="4.2.1.11"/>
    </reaction>
    <physiologicalReaction direction="left-to-right" evidence="2">
        <dbReference type="Rhea" id="RHEA:10165"/>
    </physiologicalReaction>
</comment>
<comment type="cofactor">
    <cofactor evidence="1">
        <name>Mg(2+)</name>
        <dbReference type="ChEBI" id="CHEBI:18420"/>
    </cofactor>
    <text evidence="1">Mg(2+) is required for catalysis and for stabilizing the dimer.</text>
</comment>
<comment type="pathway">
    <text evidence="2">Carbohydrate degradation; glycolysis; pyruvate from D-glyceraldehyde 3-phosphate: step 4/5.</text>
</comment>
<comment type="subunit">
    <text evidence="5">Dimer.</text>
</comment>
<comment type="subcellular location">
    <subcellularLocation>
        <location evidence="1">Cytoplasm</location>
    </subcellularLocation>
</comment>
<comment type="allergen">
    <text evidence="5">Causes an allergic reaction in human. Binds to IgE.</text>
</comment>
<comment type="similarity">
    <text evidence="4">Belongs to the enolase family.</text>
</comment>
<keyword id="KW-0020">Allergen</keyword>
<keyword id="KW-0963">Cytoplasm</keyword>
<keyword id="KW-0903">Direct protein sequencing</keyword>
<keyword id="KW-0324">Glycolysis</keyword>
<keyword id="KW-0456">Lyase</keyword>
<keyword id="KW-0460">Magnesium</keyword>
<keyword id="KW-0479">Metal-binding</keyword>
<keyword id="KW-1185">Reference proteome</keyword>
<reference evidence="7" key="1">
    <citation type="journal article" date="2013" name="Clin. Exp. Allergy">
        <title>Identification of enolases and aldolases as important fish allergens in cod, salmon and tuna: component resolved diagnosis using parvalbumin and the new allergens.</title>
        <authorList>
            <person name="Kuehn A."/>
            <person name="Hilger C."/>
            <person name="Lehners-Weber C."/>
            <person name="Codreanu-Morel F."/>
            <person name="Morisset M."/>
            <person name="Metz-Favre C."/>
            <person name="Pauli G."/>
            <person name="de Blay F."/>
            <person name="Revets D."/>
            <person name="Muller C.P."/>
            <person name="Vogel L."/>
            <person name="Vieths S."/>
            <person name="Hentges F."/>
        </authorList>
    </citation>
    <scope>PROTEIN SEQUENCE</scope>
    <scope>SUBUNIT</scope>
    <scope>ALLERGEN</scope>
    <scope>IDENTIFICATION BY MASS SPECTROMETRY</scope>
    <source>
        <tissue evidence="5">Muscle</tissue>
    </source>
</reference>